<protein>
    <recommendedName>
        <fullName evidence="1">LexA repressor 2</fullName>
        <ecNumber evidence="1">3.4.21.88</ecNumber>
    </recommendedName>
</protein>
<proteinExistence type="inferred from homology"/>
<dbReference type="EC" id="3.4.21.88" evidence="1"/>
<dbReference type="EMBL" id="AP006618">
    <property type="protein sequence ID" value="BAD58648.1"/>
    <property type="molecule type" value="Genomic_DNA"/>
</dbReference>
<dbReference type="SMR" id="Q5YT43"/>
<dbReference type="STRING" id="247156.NFA_38000"/>
<dbReference type="MEROPS" id="S24.001"/>
<dbReference type="KEGG" id="nfa:NFA_38000"/>
<dbReference type="eggNOG" id="COG1974">
    <property type="taxonomic scope" value="Bacteria"/>
</dbReference>
<dbReference type="HOGENOM" id="CLU_066192_45_0_11"/>
<dbReference type="OrthoDB" id="9802364at2"/>
<dbReference type="Proteomes" id="UP000006820">
    <property type="component" value="Chromosome"/>
</dbReference>
<dbReference type="GO" id="GO:0003677">
    <property type="term" value="F:DNA binding"/>
    <property type="evidence" value="ECO:0007669"/>
    <property type="project" value="UniProtKB-UniRule"/>
</dbReference>
<dbReference type="GO" id="GO:0004252">
    <property type="term" value="F:serine-type endopeptidase activity"/>
    <property type="evidence" value="ECO:0007669"/>
    <property type="project" value="UniProtKB-UniRule"/>
</dbReference>
<dbReference type="GO" id="GO:0006281">
    <property type="term" value="P:DNA repair"/>
    <property type="evidence" value="ECO:0007669"/>
    <property type="project" value="UniProtKB-UniRule"/>
</dbReference>
<dbReference type="GO" id="GO:0006260">
    <property type="term" value="P:DNA replication"/>
    <property type="evidence" value="ECO:0007669"/>
    <property type="project" value="UniProtKB-UniRule"/>
</dbReference>
<dbReference type="GO" id="GO:0045892">
    <property type="term" value="P:negative regulation of DNA-templated transcription"/>
    <property type="evidence" value="ECO:0007669"/>
    <property type="project" value="UniProtKB-UniRule"/>
</dbReference>
<dbReference type="GO" id="GO:0006508">
    <property type="term" value="P:proteolysis"/>
    <property type="evidence" value="ECO:0007669"/>
    <property type="project" value="InterPro"/>
</dbReference>
<dbReference type="GO" id="GO:0009432">
    <property type="term" value="P:SOS response"/>
    <property type="evidence" value="ECO:0007669"/>
    <property type="project" value="UniProtKB-UniRule"/>
</dbReference>
<dbReference type="CDD" id="cd06529">
    <property type="entry name" value="S24_LexA-like"/>
    <property type="match status" value="1"/>
</dbReference>
<dbReference type="FunFam" id="1.10.10.10:FF:000009">
    <property type="entry name" value="LexA repressor"/>
    <property type="match status" value="1"/>
</dbReference>
<dbReference type="FunFam" id="2.10.109.10:FF:000001">
    <property type="entry name" value="LexA repressor"/>
    <property type="match status" value="1"/>
</dbReference>
<dbReference type="Gene3D" id="2.10.109.10">
    <property type="entry name" value="Umud Fragment, subunit A"/>
    <property type="match status" value="1"/>
</dbReference>
<dbReference type="Gene3D" id="1.10.10.10">
    <property type="entry name" value="Winged helix-like DNA-binding domain superfamily/Winged helix DNA-binding domain"/>
    <property type="match status" value="1"/>
</dbReference>
<dbReference type="HAMAP" id="MF_00015">
    <property type="entry name" value="LexA"/>
    <property type="match status" value="1"/>
</dbReference>
<dbReference type="InterPro" id="IPR006200">
    <property type="entry name" value="LexA"/>
</dbReference>
<dbReference type="InterPro" id="IPR039418">
    <property type="entry name" value="LexA-like"/>
</dbReference>
<dbReference type="InterPro" id="IPR036286">
    <property type="entry name" value="LexA/Signal_pep-like_sf"/>
</dbReference>
<dbReference type="InterPro" id="IPR006199">
    <property type="entry name" value="LexA_DNA-bd_dom"/>
</dbReference>
<dbReference type="InterPro" id="IPR050077">
    <property type="entry name" value="LexA_repressor"/>
</dbReference>
<dbReference type="InterPro" id="IPR006197">
    <property type="entry name" value="Peptidase_S24_LexA"/>
</dbReference>
<dbReference type="InterPro" id="IPR015927">
    <property type="entry name" value="Peptidase_S24_S26A/B/C"/>
</dbReference>
<dbReference type="InterPro" id="IPR036388">
    <property type="entry name" value="WH-like_DNA-bd_sf"/>
</dbReference>
<dbReference type="InterPro" id="IPR036390">
    <property type="entry name" value="WH_DNA-bd_sf"/>
</dbReference>
<dbReference type="NCBIfam" id="TIGR00498">
    <property type="entry name" value="lexA"/>
    <property type="match status" value="1"/>
</dbReference>
<dbReference type="PANTHER" id="PTHR33516">
    <property type="entry name" value="LEXA REPRESSOR"/>
    <property type="match status" value="1"/>
</dbReference>
<dbReference type="PANTHER" id="PTHR33516:SF2">
    <property type="entry name" value="LEXA REPRESSOR-RELATED"/>
    <property type="match status" value="1"/>
</dbReference>
<dbReference type="Pfam" id="PF01726">
    <property type="entry name" value="LexA_DNA_bind"/>
    <property type="match status" value="1"/>
</dbReference>
<dbReference type="Pfam" id="PF00717">
    <property type="entry name" value="Peptidase_S24"/>
    <property type="match status" value="1"/>
</dbReference>
<dbReference type="PRINTS" id="PR00726">
    <property type="entry name" value="LEXASERPTASE"/>
</dbReference>
<dbReference type="SUPFAM" id="SSF51306">
    <property type="entry name" value="LexA/Signal peptidase"/>
    <property type="match status" value="1"/>
</dbReference>
<dbReference type="SUPFAM" id="SSF46785">
    <property type="entry name" value="Winged helix' DNA-binding domain"/>
    <property type="match status" value="1"/>
</dbReference>
<comment type="function">
    <text evidence="1">Represses a number of genes involved in the response to DNA damage (SOS response), including recA and lexA. In the presence of single-stranded DNA, RecA interacts with LexA causing an autocatalytic cleavage which disrupts the DNA-binding part of LexA, leading to derepression of the SOS regulon and eventually DNA repair.</text>
</comment>
<comment type="catalytic activity">
    <reaction evidence="1">
        <text>Hydrolysis of Ala-|-Gly bond in repressor LexA.</text>
        <dbReference type="EC" id="3.4.21.88"/>
    </reaction>
</comment>
<comment type="subunit">
    <text evidence="1">Homodimer.</text>
</comment>
<comment type="similarity">
    <text evidence="1">Belongs to the peptidase S24 family.</text>
</comment>
<organism>
    <name type="scientific">Nocardia farcinica (strain IFM 10152)</name>
    <dbReference type="NCBI Taxonomy" id="247156"/>
    <lineage>
        <taxon>Bacteria</taxon>
        <taxon>Bacillati</taxon>
        <taxon>Actinomycetota</taxon>
        <taxon>Actinomycetes</taxon>
        <taxon>Mycobacteriales</taxon>
        <taxon>Nocardiaceae</taxon>
        <taxon>Nocardia</taxon>
    </lineage>
</organism>
<feature type="chain" id="PRO_0000170061" description="LexA repressor 2">
    <location>
        <begin position="1"/>
        <end position="243"/>
    </location>
</feature>
<feature type="DNA-binding region" description="H-T-H motif" evidence="1">
    <location>
        <begin position="48"/>
        <end position="68"/>
    </location>
</feature>
<feature type="active site" description="For autocatalytic cleavage activity" evidence="1">
    <location>
        <position position="167"/>
    </location>
</feature>
<feature type="active site" description="For autocatalytic cleavage activity" evidence="1">
    <location>
        <position position="204"/>
    </location>
</feature>
<feature type="site" description="Cleavage; by autolysis" evidence="1">
    <location>
        <begin position="132"/>
        <end position="133"/>
    </location>
</feature>
<name>LEXA2_NOCFA</name>
<evidence type="ECO:0000255" key="1">
    <source>
        <dbReference type="HAMAP-Rule" id="MF_00015"/>
    </source>
</evidence>
<accession>Q5YT43</accession>
<gene>
    <name evidence="1" type="primary">lexA2</name>
    <name type="ordered locus">NFA_38000</name>
</gene>
<keyword id="KW-0068">Autocatalytic cleavage</keyword>
<keyword id="KW-0227">DNA damage</keyword>
<keyword id="KW-0234">DNA repair</keyword>
<keyword id="KW-0235">DNA replication</keyword>
<keyword id="KW-0238">DNA-binding</keyword>
<keyword id="KW-0378">Hydrolase</keyword>
<keyword id="KW-1185">Reference proteome</keyword>
<keyword id="KW-0678">Repressor</keyword>
<keyword id="KW-0742">SOS response</keyword>
<keyword id="KW-0804">Transcription</keyword>
<keyword id="KW-0805">Transcription regulation</keyword>
<sequence length="243" mass="26102">MSRTDDTGEESGVAVDPALNGADLTVRQRKVLEVIRTSVSERGYPPSIREIGDAVGLTSTSSVAHQLRALERKGYLRRDPNRPRAVDVRGLDEAVRAVTALPGAALEEPDTLAEDTGRPTPTFVPVLGRIAAGGPILAEQAVEDVFPLPRELVGDGSLFLLRVVGQSMVDAAICDGDWVVVRQQNVAENGDIVAAMIDGEATVKTFKRTGKDVWLMPHNPLFEPIPGNDARILGKVVTVIRKI</sequence>
<reference key="1">
    <citation type="journal article" date="2004" name="Proc. Natl. Acad. Sci. U.S.A.">
        <title>The complete genomic sequence of Nocardia farcinica IFM 10152.</title>
        <authorList>
            <person name="Ishikawa J."/>
            <person name="Yamashita A."/>
            <person name="Mikami Y."/>
            <person name="Hoshino Y."/>
            <person name="Kurita H."/>
            <person name="Hotta K."/>
            <person name="Shiba T."/>
            <person name="Hattori M."/>
        </authorList>
    </citation>
    <scope>NUCLEOTIDE SEQUENCE [LARGE SCALE GENOMIC DNA]</scope>
    <source>
        <strain>IFM 10152</strain>
    </source>
</reference>